<proteinExistence type="inferred from homology"/>
<evidence type="ECO:0000250" key="1"/>
<evidence type="ECO:0000250" key="2">
    <source>
        <dbReference type="UniProtKB" id="H6VC06"/>
    </source>
</evidence>
<evidence type="ECO:0000255" key="3"/>
<evidence type="ECO:0000255" key="4">
    <source>
        <dbReference type="PROSITE-ProRule" id="PRU00031"/>
    </source>
</evidence>
<evidence type="ECO:0000303" key="5">
    <source ref="1"/>
</evidence>
<evidence type="ECO:0000305" key="6"/>
<evidence type="ECO:0000305" key="7">
    <source ref="1"/>
</evidence>
<comment type="function">
    <text evidence="2">Serine protease inhibitor that inhibits plasmin and trypsin.</text>
</comment>
<comment type="subcellular location">
    <subcellularLocation>
        <location evidence="7">Secreted</location>
    </subcellularLocation>
</comment>
<comment type="tissue specificity">
    <text evidence="7">Expressed by the venom gland.</text>
</comment>
<comment type="similarity">
    <text evidence="6">Belongs to the venom Kunitz-type family.</text>
</comment>
<protein>
    <recommendedName>
        <fullName>Kunitz-type serine protease inhibitor B4</fullName>
    </recommendedName>
    <alternativeName>
        <fullName evidence="5">BPTI-4</fullName>
    </alternativeName>
    <alternativeName>
        <fullName evidence="5">Trypsin inhibitor 4</fullName>
    </alternativeName>
    <alternativeName>
        <fullName>Trypsin inhibitor B4</fullName>
    </alternativeName>
</protein>
<sequence length="84" mass="9371">MSSGGLLLLLGLLTLWAELTPISGHDRPTFCNLAPESGRCRGHLRRIYYNLESNKCEVFFYGGCGGNDNNFSTWDECRHTCVGK</sequence>
<reference key="1">
    <citation type="submission" date="2006-11" db="EMBL/GenBank/DDBJ databases">
        <title>BPTI petides from Burmese Daboia russellii siamensis.</title>
        <authorList>
            <person name="Guo C."/>
            <person name="McClean S."/>
            <person name="Shaw C."/>
            <person name="Rao P."/>
            <person name="Ye M."/>
            <person name="Anthony John B."/>
        </authorList>
    </citation>
    <scope>NUCLEOTIDE SEQUENCE [MRNA]</scope>
    <source>
        <strain>Burma</strain>
        <tissue>Venom gland</tissue>
    </source>
</reference>
<keyword id="KW-1015">Disulfide bond</keyword>
<keyword id="KW-0325">Glycoprotein</keyword>
<keyword id="KW-1199">Hemostasis impairing toxin</keyword>
<keyword id="KW-0646">Protease inhibitor</keyword>
<keyword id="KW-0964">Secreted</keyword>
<keyword id="KW-0722">Serine protease inhibitor</keyword>
<keyword id="KW-0732">Signal</keyword>
<keyword id="KW-0800">Toxin</keyword>
<accession>A8Y7P4</accession>
<organism>
    <name type="scientific">Daboia siamensis</name>
    <name type="common">Eastern Russel's viper</name>
    <name type="synonym">Daboia russelii siamensis</name>
    <dbReference type="NCBI Taxonomy" id="343250"/>
    <lineage>
        <taxon>Eukaryota</taxon>
        <taxon>Metazoa</taxon>
        <taxon>Chordata</taxon>
        <taxon>Craniata</taxon>
        <taxon>Vertebrata</taxon>
        <taxon>Euteleostomi</taxon>
        <taxon>Lepidosauria</taxon>
        <taxon>Squamata</taxon>
        <taxon>Bifurcata</taxon>
        <taxon>Unidentata</taxon>
        <taxon>Episquamata</taxon>
        <taxon>Toxicofera</taxon>
        <taxon>Serpentes</taxon>
        <taxon>Colubroidea</taxon>
        <taxon>Viperidae</taxon>
        <taxon>Viperinae</taxon>
        <taxon>Daboia</taxon>
    </lineage>
</organism>
<dbReference type="EMBL" id="AM411371">
    <property type="protein sequence ID" value="CAL69612.1"/>
    <property type="molecule type" value="mRNA"/>
</dbReference>
<dbReference type="SMR" id="A8Y7P4"/>
<dbReference type="MEROPS" id="I02.062"/>
<dbReference type="GO" id="GO:0005615">
    <property type="term" value="C:extracellular space"/>
    <property type="evidence" value="ECO:0007669"/>
    <property type="project" value="TreeGrafter"/>
</dbReference>
<dbReference type="GO" id="GO:0004867">
    <property type="term" value="F:serine-type endopeptidase inhibitor activity"/>
    <property type="evidence" value="ECO:0007669"/>
    <property type="project" value="UniProtKB-KW"/>
</dbReference>
<dbReference type="GO" id="GO:0090729">
    <property type="term" value="F:toxin activity"/>
    <property type="evidence" value="ECO:0007669"/>
    <property type="project" value="UniProtKB-KW"/>
</dbReference>
<dbReference type="FunFam" id="4.10.410.10:FF:000021">
    <property type="entry name" value="Serine protease inhibitor, putative"/>
    <property type="match status" value="1"/>
</dbReference>
<dbReference type="Gene3D" id="4.10.410.10">
    <property type="entry name" value="Pancreatic trypsin inhibitor Kunitz domain"/>
    <property type="match status" value="1"/>
</dbReference>
<dbReference type="InterPro" id="IPR002223">
    <property type="entry name" value="Kunitz_BPTI"/>
</dbReference>
<dbReference type="InterPro" id="IPR036880">
    <property type="entry name" value="Kunitz_BPTI_sf"/>
</dbReference>
<dbReference type="InterPro" id="IPR020901">
    <property type="entry name" value="Prtase_inh_Kunz-CS"/>
</dbReference>
<dbReference type="InterPro" id="IPR050098">
    <property type="entry name" value="TFPI/VKTCI-like"/>
</dbReference>
<dbReference type="PANTHER" id="PTHR10083:SF374">
    <property type="entry name" value="BPTI_KUNITZ INHIBITOR DOMAIN-CONTAINING PROTEIN"/>
    <property type="match status" value="1"/>
</dbReference>
<dbReference type="PANTHER" id="PTHR10083">
    <property type="entry name" value="KUNITZ-TYPE PROTEASE INHIBITOR-RELATED"/>
    <property type="match status" value="1"/>
</dbReference>
<dbReference type="Pfam" id="PF00014">
    <property type="entry name" value="Kunitz_BPTI"/>
    <property type="match status" value="1"/>
</dbReference>
<dbReference type="PRINTS" id="PR00759">
    <property type="entry name" value="BASICPTASE"/>
</dbReference>
<dbReference type="SMART" id="SM00131">
    <property type="entry name" value="KU"/>
    <property type="match status" value="1"/>
</dbReference>
<dbReference type="SUPFAM" id="SSF57362">
    <property type="entry name" value="BPTI-like"/>
    <property type="match status" value="1"/>
</dbReference>
<dbReference type="PROSITE" id="PS00280">
    <property type="entry name" value="BPTI_KUNITZ_1"/>
    <property type="match status" value="1"/>
</dbReference>
<dbReference type="PROSITE" id="PS50279">
    <property type="entry name" value="BPTI_KUNITZ_2"/>
    <property type="match status" value="1"/>
</dbReference>
<feature type="signal peptide" evidence="3">
    <location>
        <begin position="1"/>
        <end position="24"/>
    </location>
</feature>
<feature type="chain" id="PRO_5000284437" description="Kunitz-type serine protease inhibitor B4">
    <location>
        <begin position="25"/>
        <end position="84"/>
    </location>
</feature>
<feature type="domain" description="BPTI/Kunitz inhibitor" evidence="4">
    <location>
        <begin position="31"/>
        <end position="81"/>
    </location>
</feature>
<feature type="site" description="Reactive bond for trypsin" evidence="1">
    <location>
        <begin position="41"/>
        <end position="42"/>
    </location>
</feature>
<feature type="glycosylation site" description="N-linked (GlcNAc...) asparagine" evidence="3">
    <location>
        <position position="70"/>
    </location>
</feature>
<feature type="disulfide bond" evidence="4">
    <location>
        <begin position="31"/>
        <end position="81"/>
    </location>
</feature>
<feature type="disulfide bond" evidence="4">
    <location>
        <begin position="40"/>
        <end position="64"/>
    </location>
</feature>
<feature type="disulfide bond" evidence="4">
    <location>
        <begin position="56"/>
        <end position="77"/>
    </location>
</feature>
<name>VKTB4_DABSI</name>